<sequence>SDIGGSMDYDVVIVGAGGAGLSAAILKQVNP</sequence>
<comment type="function">
    <text>Accepts electrons from ETF and reduces ubiquinone.</text>
</comment>
<comment type="catalytic activity">
    <reaction>
        <text>a ubiquinone + reduced [electron-transfer flavoprotein] = a ubiquinol + oxidized [electron-transfer flavoprotein] + H(+)</text>
        <dbReference type="Rhea" id="RHEA:24052"/>
        <dbReference type="Rhea" id="RHEA-COMP:9565"/>
        <dbReference type="Rhea" id="RHEA-COMP:9566"/>
        <dbReference type="Rhea" id="RHEA-COMP:10685"/>
        <dbReference type="Rhea" id="RHEA-COMP:10686"/>
        <dbReference type="ChEBI" id="CHEBI:15378"/>
        <dbReference type="ChEBI" id="CHEBI:16389"/>
        <dbReference type="ChEBI" id="CHEBI:17976"/>
        <dbReference type="ChEBI" id="CHEBI:57692"/>
        <dbReference type="ChEBI" id="CHEBI:58307"/>
        <dbReference type="EC" id="1.5.5.1"/>
    </reaction>
</comment>
<comment type="cofactor">
    <cofactor>
        <name>[4Fe-4S] cluster</name>
        <dbReference type="ChEBI" id="CHEBI:49883"/>
    </cofactor>
    <text>Binds 1 [4Fe-4S] cluster.</text>
</comment>
<comment type="cofactor">
    <cofactor>
        <name>FAD</name>
        <dbReference type="ChEBI" id="CHEBI:57692"/>
    </cofactor>
</comment>
<comment type="subunit">
    <text evidence="1">Monomer.</text>
</comment>
<evidence type="ECO:0000250" key="1"/>
<evidence type="ECO:0000255" key="2"/>
<name>ETFD_PARDE</name>
<reference key="1">
    <citation type="journal article" date="1994" name="Eur. J. Biochem.">
        <title>Molecular cloning and expression of a cDNA encoding human electron transfer flavoprotein-ubiquinone oxidoreductase.</title>
        <authorList>
            <person name="Goodman S.I."/>
            <person name="Axtell K.M."/>
            <person name="Bindoff L.A."/>
            <person name="Beard S.E."/>
            <person name="Gill R.E."/>
            <person name="Frerman F.E."/>
        </authorList>
    </citation>
    <scope>PROTEIN SEQUENCE</scope>
</reference>
<protein>
    <recommendedName>
        <fullName>Electron transfer flavoprotein-ubiquinone oxidoreductase</fullName>
        <shortName>ETF-QO</shortName>
        <shortName>ETF-ubiquinone oxidoreductase</shortName>
        <ecNumber>1.5.5.1</ecNumber>
    </recommendedName>
    <alternativeName>
        <fullName>Electron-transferring-flavoprotein dehydrogenase</fullName>
        <shortName>ETF dehydrogenase</shortName>
    </alternativeName>
</protein>
<organism>
    <name type="scientific">Paracoccus denitrificans</name>
    <dbReference type="NCBI Taxonomy" id="266"/>
    <lineage>
        <taxon>Bacteria</taxon>
        <taxon>Pseudomonadati</taxon>
        <taxon>Pseudomonadota</taxon>
        <taxon>Alphaproteobacteria</taxon>
        <taxon>Rhodobacterales</taxon>
        <taxon>Paracoccaceae</taxon>
        <taxon>Paracoccus</taxon>
    </lineage>
</organism>
<keyword id="KW-0004">4Fe-4S</keyword>
<keyword id="KW-0903">Direct protein sequencing</keyword>
<keyword id="KW-0249">Electron transport</keyword>
<keyword id="KW-0274">FAD</keyword>
<keyword id="KW-0285">Flavoprotein</keyword>
<keyword id="KW-0408">Iron</keyword>
<keyword id="KW-0411">Iron-sulfur</keyword>
<keyword id="KW-0479">Metal-binding</keyword>
<keyword id="KW-0560">Oxidoreductase</keyword>
<keyword id="KW-0813">Transport</keyword>
<keyword id="KW-0830">Ubiquinone</keyword>
<feature type="chain" id="PRO_0000200682" description="Electron transfer flavoprotein-ubiquinone oxidoreductase">
    <location>
        <begin position="1"/>
        <end position="31" status="greater than"/>
    </location>
</feature>
<feature type="binding site" evidence="2">
    <location>
        <begin position="11"/>
        <end position="25"/>
    </location>
    <ligand>
        <name>FAD</name>
        <dbReference type="ChEBI" id="CHEBI:57692"/>
    </ligand>
</feature>
<feature type="non-terminal residue">
    <location>
        <position position="31"/>
    </location>
</feature>
<accession>P55932</accession>
<dbReference type="EC" id="1.5.5.1"/>
<dbReference type="SMR" id="P55932"/>
<dbReference type="GO" id="GO:0051539">
    <property type="term" value="F:4 iron, 4 sulfur cluster binding"/>
    <property type="evidence" value="ECO:0007669"/>
    <property type="project" value="UniProtKB-KW"/>
</dbReference>
<dbReference type="GO" id="GO:0004174">
    <property type="term" value="F:electron-transferring-flavoprotein dehydrogenase activity"/>
    <property type="evidence" value="ECO:0007669"/>
    <property type="project" value="UniProtKB-EC"/>
</dbReference>
<dbReference type="GO" id="GO:0046872">
    <property type="term" value="F:metal ion binding"/>
    <property type="evidence" value="ECO:0007669"/>
    <property type="project" value="UniProtKB-KW"/>
</dbReference>
<dbReference type="Gene3D" id="3.50.50.60">
    <property type="entry name" value="FAD/NAD(P)-binding domain"/>
    <property type="match status" value="1"/>
</dbReference>
<dbReference type="InterPro" id="IPR036188">
    <property type="entry name" value="FAD/NAD-bd_sf"/>
</dbReference>
<dbReference type="SUPFAM" id="SSF51905">
    <property type="entry name" value="FAD/NAD(P)-binding domain"/>
    <property type="match status" value="1"/>
</dbReference>
<proteinExistence type="evidence at protein level"/>